<sequence length="122" mass="13542">MARIAGVNIPTAKRVPIALTYITGIGNTSAKQICEAVGIDPSRRVNELSDAEVLAVREHIDANYTVEGDLRREVQMNVKRLMDLGCYRGLRHRRNLPVRGQRTHTNARTRKGPAKAIAGKKK</sequence>
<protein>
    <recommendedName>
        <fullName evidence="1">Small ribosomal subunit protein uS13</fullName>
    </recommendedName>
    <alternativeName>
        <fullName evidence="3">30S ribosomal protein S13</fullName>
    </alternativeName>
</protein>
<keyword id="KW-1185">Reference proteome</keyword>
<keyword id="KW-0687">Ribonucleoprotein</keyword>
<keyword id="KW-0689">Ribosomal protein</keyword>
<keyword id="KW-0694">RNA-binding</keyword>
<keyword id="KW-0699">rRNA-binding</keyword>
<keyword id="KW-0820">tRNA-binding</keyword>
<reference key="1">
    <citation type="journal article" date="2007" name="J. Bacteriol.">
        <title>The complete genome sequence of Roseobacter denitrificans reveals a mixotrophic rather than photosynthetic metabolism.</title>
        <authorList>
            <person name="Swingley W.D."/>
            <person name="Sadekar S."/>
            <person name="Mastrian S.D."/>
            <person name="Matthies H.J."/>
            <person name="Hao J."/>
            <person name="Ramos H."/>
            <person name="Acharya C.R."/>
            <person name="Conrad A.L."/>
            <person name="Taylor H.L."/>
            <person name="Dejesa L.C."/>
            <person name="Shah M.K."/>
            <person name="O'Huallachain M.E."/>
            <person name="Lince M.T."/>
            <person name="Blankenship R.E."/>
            <person name="Beatty J.T."/>
            <person name="Touchman J.W."/>
        </authorList>
    </citation>
    <scope>NUCLEOTIDE SEQUENCE [LARGE SCALE GENOMIC DNA]</scope>
    <source>
        <strain>ATCC 33942 / OCh 114</strain>
    </source>
</reference>
<gene>
    <name evidence="1" type="primary">rpsM</name>
    <name type="ordered locus">RD1_1435</name>
</gene>
<organism>
    <name type="scientific">Roseobacter denitrificans (strain ATCC 33942 / OCh 114)</name>
    <name type="common">Erythrobacter sp. (strain OCh 114)</name>
    <name type="synonym">Roseobacter denitrificans</name>
    <dbReference type="NCBI Taxonomy" id="375451"/>
    <lineage>
        <taxon>Bacteria</taxon>
        <taxon>Pseudomonadati</taxon>
        <taxon>Pseudomonadota</taxon>
        <taxon>Alphaproteobacteria</taxon>
        <taxon>Rhodobacterales</taxon>
        <taxon>Roseobacteraceae</taxon>
        <taxon>Roseobacter</taxon>
    </lineage>
</organism>
<dbReference type="EMBL" id="CP000362">
    <property type="protein sequence ID" value="ABG31073.1"/>
    <property type="molecule type" value="Genomic_DNA"/>
</dbReference>
<dbReference type="RefSeq" id="WP_011567693.1">
    <property type="nucleotide sequence ID" value="NC_008209.1"/>
</dbReference>
<dbReference type="SMR" id="Q16AC0"/>
<dbReference type="STRING" id="375451.RD1_1435"/>
<dbReference type="KEGG" id="rde:RD1_1435"/>
<dbReference type="eggNOG" id="COG0099">
    <property type="taxonomic scope" value="Bacteria"/>
</dbReference>
<dbReference type="HOGENOM" id="CLU_103849_1_2_5"/>
<dbReference type="OrthoDB" id="9803610at2"/>
<dbReference type="Proteomes" id="UP000007029">
    <property type="component" value="Chromosome"/>
</dbReference>
<dbReference type="GO" id="GO:0005829">
    <property type="term" value="C:cytosol"/>
    <property type="evidence" value="ECO:0007669"/>
    <property type="project" value="TreeGrafter"/>
</dbReference>
<dbReference type="GO" id="GO:0015935">
    <property type="term" value="C:small ribosomal subunit"/>
    <property type="evidence" value="ECO:0007669"/>
    <property type="project" value="TreeGrafter"/>
</dbReference>
<dbReference type="GO" id="GO:0019843">
    <property type="term" value="F:rRNA binding"/>
    <property type="evidence" value="ECO:0007669"/>
    <property type="project" value="UniProtKB-UniRule"/>
</dbReference>
<dbReference type="GO" id="GO:0003735">
    <property type="term" value="F:structural constituent of ribosome"/>
    <property type="evidence" value="ECO:0007669"/>
    <property type="project" value="InterPro"/>
</dbReference>
<dbReference type="GO" id="GO:0000049">
    <property type="term" value="F:tRNA binding"/>
    <property type="evidence" value="ECO:0007669"/>
    <property type="project" value="UniProtKB-UniRule"/>
</dbReference>
<dbReference type="GO" id="GO:0006412">
    <property type="term" value="P:translation"/>
    <property type="evidence" value="ECO:0007669"/>
    <property type="project" value="UniProtKB-UniRule"/>
</dbReference>
<dbReference type="FunFam" id="1.10.8.50:FF:000001">
    <property type="entry name" value="30S ribosomal protein S13"/>
    <property type="match status" value="1"/>
</dbReference>
<dbReference type="FunFam" id="4.10.910.10:FF:000001">
    <property type="entry name" value="30S ribosomal protein S13"/>
    <property type="match status" value="1"/>
</dbReference>
<dbReference type="Gene3D" id="1.10.8.50">
    <property type="match status" value="1"/>
</dbReference>
<dbReference type="Gene3D" id="4.10.910.10">
    <property type="entry name" value="30s ribosomal protein s13, domain 2"/>
    <property type="match status" value="1"/>
</dbReference>
<dbReference type="HAMAP" id="MF_01315">
    <property type="entry name" value="Ribosomal_uS13"/>
    <property type="match status" value="1"/>
</dbReference>
<dbReference type="InterPro" id="IPR027437">
    <property type="entry name" value="Rbsml_uS13_C"/>
</dbReference>
<dbReference type="InterPro" id="IPR001892">
    <property type="entry name" value="Ribosomal_uS13"/>
</dbReference>
<dbReference type="InterPro" id="IPR010979">
    <property type="entry name" value="Ribosomal_uS13-like_H2TH"/>
</dbReference>
<dbReference type="InterPro" id="IPR019980">
    <property type="entry name" value="Ribosomal_uS13_bac-type"/>
</dbReference>
<dbReference type="InterPro" id="IPR018269">
    <property type="entry name" value="Ribosomal_uS13_CS"/>
</dbReference>
<dbReference type="NCBIfam" id="TIGR03631">
    <property type="entry name" value="uS13_bact"/>
    <property type="match status" value="1"/>
</dbReference>
<dbReference type="PANTHER" id="PTHR10871">
    <property type="entry name" value="30S RIBOSOMAL PROTEIN S13/40S RIBOSOMAL PROTEIN S18"/>
    <property type="match status" value="1"/>
</dbReference>
<dbReference type="PANTHER" id="PTHR10871:SF1">
    <property type="entry name" value="SMALL RIBOSOMAL SUBUNIT PROTEIN US13M"/>
    <property type="match status" value="1"/>
</dbReference>
<dbReference type="Pfam" id="PF00416">
    <property type="entry name" value="Ribosomal_S13"/>
    <property type="match status" value="1"/>
</dbReference>
<dbReference type="PIRSF" id="PIRSF002134">
    <property type="entry name" value="Ribosomal_S13"/>
    <property type="match status" value="1"/>
</dbReference>
<dbReference type="SUPFAM" id="SSF46946">
    <property type="entry name" value="S13-like H2TH domain"/>
    <property type="match status" value="1"/>
</dbReference>
<dbReference type="PROSITE" id="PS00646">
    <property type="entry name" value="RIBOSOMAL_S13_1"/>
    <property type="match status" value="1"/>
</dbReference>
<dbReference type="PROSITE" id="PS50159">
    <property type="entry name" value="RIBOSOMAL_S13_2"/>
    <property type="match status" value="1"/>
</dbReference>
<comment type="function">
    <text evidence="1">Located at the top of the head of the 30S subunit, it contacts several helices of the 16S rRNA. In the 70S ribosome it contacts the 23S rRNA (bridge B1a) and protein L5 of the 50S subunit (bridge B1b), connecting the 2 subunits; these bridges are implicated in subunit movement. Contacts the tRNAs in the A and P-sites.</text>
</comment>
<comment type="subunit">
    <text evidence="1">Part of the 30S ribosomal subunit. Forms a loose heterodimer with protein S19. Forms two bridges to the 50S subunit in the 70S ribosome.</text>
</comment>
<comment type="similarity">
    <text evidence="1">Belongs to the universal ribosomal protein uS13 family.</text>
</comment>
<name>RS13_ROSDO</name>
<evidence type="ECO:0000255" key="1">
    <source>
        <dbReference type="HAMAP-Rule" id="MF_01315"/>
    </source>
</evidence>
<evidence type="ECO:0000256" key="2">
    <source>
        <dbReference type="SAM" id="MobiDB-lite"/>
    </source>
</evidence>
<evidence type="ECO:0000305" key="3"/>
<feature type="chain" id="PRO_0000306696" description="Small ribosomal subunit protein uS13">
    <location>
        <begin position="1"/>
        <end position="122"/>
    </location>
</feature>
<feature type="region of interest" description="Disordered" evidence="2">
    <location>
        <begin position="98"/>
        <end position="122"/>
    </location>
</feature>
<proteinExistence type="inferred from homology"/>
<accession>Q16AC0</accession>